<feature type="chain" id="PRO_1000164574" description="Orotidine 5'-phosphate decarboxylase">
    <location>
        <begin position="1"/>
        <end position="233"/>
    </location>
</feature>
<feature type="active site" description="Proton donor" evidence="1">
    <location>
        <position position="60"/>
    </location>
</feature>
<feature type="binding site" evidence="1">
    <location>
        <position position="9"/>
    </location>
    <ligand>
        <name>substrate</name>
    </ligand>
</feature>
<feature type="binding site" evidence="1">
    <location>
        <position position="31"/>
    </location>
    <ligand>
        <name>substrate</name>
    </ligand>
</feature>
<feature type="binding site" evidence="1">
    <location>
        <begin position="58"/>
        <end position="67"/>
    </location>
    <ligand>
        <name>substrate</name>
    </ligand>
</feature>
<feature type="binding site" evidence="1">
    <location>
        <position position="120"/>
    </location>
    <ligand>
        <name>substrate</name>
    </ligand>
</feature>
<feature type="binding site" evidence="1">
    <location>
        <position position="182"/>
    </location>
    <ligand>
        <name>substrate</name>
    </ligand>
</feature>
<feature type="binding site" evidence="1">
    <location>
        <position position="191"/>
    </location>
    <ligand>
        <name>substrate</name>
    </ligand>
</feature>
<feature type="binding site" evidence="1">
    <location>
        <position position="211"/>
    </location>
    <ligand>
        <name>substrate</name>
    </ligand>
</feature>
<feature type="binding site" evidence="1">
    <location>
        <position position="212"/>
    </location>
    <ligand>
        <name>substrate</name>
    </ligand>
</feature>
<keyword id="KW-0210">Decarboxylase</keyword>
<keyword id="KW-0456">Lyase</keyword>
<keyword id="KW-0665">Pyrimidine biosynthesis</keyword>
<dbReference type="EC" id="4.1.1.23" evidence="1"/>
<dbReference type="EMBL" id="CP001175">
    <property type="protein sequence ID" value="ACK39079.1"/>
    <property type="molecule type" value="Genomic_DNA"/>
</dbReference>
<dbReference type="RefSeq" id="WP_012581113.1">
    <property type="nucleotide sequence ID" value="NC_011660.1"/>
</dbReference>
<dbReference type="SMR" id="B8DDS0"/>
<dbReference type="KEGG" id="lmh:LMHCC_0724"/>
<dbReference type="HOGENOM" id="CLU_067069_1_1_9"/>
<dbReference type="UniPathway" id="UPA00070">
    <property type="reaction ID" value="UER00120"/>
</dbReference>
<dbReference type="GO" id="GO:0005829">
    <property type="term" value="C:cytosol"/>
    <property type="evidence" value="ECO:0007669"/>
    <property type="project" value="TreeGrafter"/>
</dbReference>
<dbReference type="GO" id="GO:0004590">
    <property type="term" value="F:orotidine-5'-phosphate decarboxylase activity"/>
    <property type="evidence" value="ECO:0007669"/>
    <property type="project" value="UniProtKB-UniRule"/>
</dbReference>
<dbReference type="GO" id="GO:0006207">
    <property type="term" value="P:'de novo' pyrimidine nucleobase biosynthetic process"/>
    <property type="evidence" value="ECO:0007669"/>
    <property type="project" value="InterPro"/>
</dbReference>
<dbReference type="GO" id="GO:0044205">
    <property type="term" value="P:'de novo' UMP biosynthetic process"/>
    <property type="evidence" value="ECO:0007669"/>
    <property type="project" value="UniProtKB-UniRule"/>
</dbReference>
<dbReference type="CDD" id="cd04725">
    <property type="entry name" value="OMP_decarboxylase_like"/>
    <property type="match status" value="1"/>
</dbReference>
<dbReference type="FunFam" id="3.20.20.70:FF:000015">
    <property type="entry name" value="Orotidine 5'-phosphate decarboxylase"/>
    <property type="match status" value="1"/>
</dbReference>
<dbReference type="Gene3D" id="3.20.20.70">
    <property type="entry name" value="Aldolase class I"/>
    <property type="match status" value="1"/>
</dbReference>
<dbReference type="HAMAP" id="MF_01200_B">
    <property type="entry name" value="OMPdecase_type1_B"/>
    <property type="match status" value="1"/>
</dbReference>
<dbReference type="InterPro" id="IPR013785">
    <property type="entry name" value="Aldolase_TIM"/>
</dbReference>
<dbReference type="InterPro" id="IPR014732">
    <property type="entry name" value="OMPdecase"/>
</dbReference>
<dbReference type="InterPro" id="IPR018089">
    <property type="entry name" value="OMPdecase_AS"/>
</dbReference>
<dbReference type="InterPro" id="IPR047596">
    <property type="entry name" value="OMPdecase_bac"/>
</dbReference>
<dbReference type="InterPro" id="IPR001754">
    <property type="entry name" value="OMPdeCOase_dom"/>
</dbReference>
<dbReference type="InterPro" id="IPR011060">
    <property type="entry name" value="RibuloseP-bd_barrel"/>
</dbReference>
<dbReference type="NCBIfam" id="NF001273">
    <property type="entry name" value="PRK00230.1"/>
    <property type="match status" value="1"/>
</dbReference>
<dbReference type="NCBIfam" id="TIGR01740">
    <property type="entry name" value="pyrF"/>
    <property type="match status" value="1"/>
</dbReference>
<dbReference type="PANTHER" id="PTHR32119">
    <property type="entry name" value="OROTIDINE 5'-PHOSPHATE DECARBOXYLASE"/>
    <property type="match status" value="1"/>
</dbReference>
<dbReference type="PANTHER" id="PTHR32119:SF2">
    <property type="entry name" value="OROTIDINE 5'-PHOSPHATE DECARBOXYLASE"/>
    <property type="match status" value="1"/>
</dbReference>
<dbReference type="Pfam" id="PF00215">
    <property type="entry name" value="OMPdecase"/>
    <property type="match status" value="1"/>
</dbReference>
<dbReference type="SMART" id="SM00934">
    <property type="entry name" value="OMPdecase"/>
    <property type="match status" value="1"/>
</dbReference>
<dbReference type="SUPFAM" id="SSF51366">
    <property type="entry name" value="Ribulose-phoshate binding barrel"/>
    <property type="match status" value="1"/>
</dbReference>
<dbReference type="PROSITE" id="PS00156">
    <property type="entry name" value="OMPDECASE"/>
    <property type="match status" value="1"/>
</dbReference>
<comment type="function">
    <text evidence="1">Catalyzes the decarboxylation of orotidine 5'-monophosphate (OMP) to uridine 5'-monophosphate (UMP).</text>
</comment>
<comment type="catalytic activity">
    <reaction evidence="1">
        <text>orotidine 5'-phosphate + H(+) = UMP + CO2</text>
        <dbReference type="Rhea" id="RHEA:11596"/>
        <dbReference type="ChEBI" id="CHEBI:15378"/>
        <dbReference type="ChEBI" id="CHEBI:16526"/>
        <dbReference type="ChEBI" id="CHEBI:57538"/>
        <dbReference type="ChEBI" id="CHEBI:57865"/>
        <dbReference type="EC" id="4.1.1.23"/>
    </reaction>
</comment>
<comment type="pathway">
    <text evidence="1">Pyrimidine metabolism; UMP biosynthesis via de novo pathway; UMP from orotate: step 2/2.</text>
</comment>
<comment type="subunit">
    <text evidence="1">Homodimer.</text>
</comment>
<comment type="similarity">
    <text evidence="1">Belongs to the OMP decarboxylase family. Type 1 subfamily.</text>
</comment>
<sequence>MNKPIIALDFQTYEEVEQFLAKFSGEALSVKVGMELFYSNGPIIVEKIKQQNHEIFLDLKLHDIPNTVKSAMVGLAKLGVDMVNVHAAGGKNMMEAALEGLEIGSGSGKRPKIIAVTQLTSTSEASMQSEQLIKTSLLESVLHYSALTNQAGLNGVVCSALEAEAIKQQNGADFLRVTPGIRLASDAADDQIRVVTPEKARLIGSTDIVVGRSITRANDPVAAYNQVLKEWNV</sequence>
<proteinExistence type="inferred from homology"/>
<organism>
    <name type="scientific">Listeria monocytogenes serotype 4a (strain HCC23)</name>
    <dbReference type="NCBI Taxonomy" id="552536"/>
    <lineage>
        <taxon>Bacteria</taxon>
        <taxon>Bacillati</taxon>
        <taxon>Bacillota</taxon>
        <taxon>Bacilli</taxon>
        <taxon>Bacillales</taxon>
        <taxon>Listeriaceae</taxon>
        <taxon>Listeria</taxon>
    </lineage>
</organism>
<accession>B8DDS0</accession>
<reference key="1">
    <citation type="journal article" date="2011" name="J. Bacteriol.">
        <title>Genome sequence of lineage III Listeria monocytogenes strain HCC23.</title>
        <authorList>
            <person name="Steele C.L."/>
            <person name="Donaldson J.R."/>
            <person name="Paul D."/>
            <person name="Banes M.M."/>
            <person name="Arick T."/>
            <person name="Bridges S.M."/>
            <person name="Lawrence M.L."/>
        </authorList>
    </citation>
    <scope>NUCLEOTIDE SEQUENCE [LARGE SCALE GENOMIC DNA]</scope>
    <source>
        <strain>HCC23</strain>
    </source>
</reference>
<gene>
    <name evidence="1" type="primary">pyrF</name>
    <name type="ordered locus">LMHCC_0724</name>
</gene>
<evidence type="ECO:0000255" key="1">
    <source>
        <dbReference type="HAMAP-Rule" id="MF_01200"/>
    </source>
</evidence>
<protein>
    <recommendedName>
        <fullName evidence="1">Orotidine 5'-phosphate decarboxylase</fullName>
        <ecNumber evidence="1">4.1.1.23</ecNumber>
    </recommendedName>
    <alternativeName>
        <fullName evidence="1">OMP decarboxylase</fullName>
        <shortName evidence="1">OMPDCase</shortName>
        <shortName evidence="1">OMPdecase</shortName>
    </alternativeName>
</protein>
<name>PYRF_LISMH</name>